<gene>
    <name evidence="1" type="primary">groEL</name>
    <name evidence="1" type="synonym">groL</name>
    <name type="ordered locus">Suden_0631</name>
</gene>
<keyword id="KW-0067">ATP-binding</keyword>
<keyword id="KW-0143">Chaperone</keyword>
<keyword id="KW-0963">Cytoplasm</keyword>
<keyword id="KW-0413">Isomerase</keyword>
<keyword id="KW-0547">Nucleotide-binding</keyword>
<keyword id="KW-1185">Reference proteome</keyword>
<sequence length="542" mass="57169">MAKEIIFSDNARNALARGVAKLTDAVKVTMGPRGRNVLIQKSYGNPIITKDGVSVAREIELQDKLENMGATLVKDVASRTADEAGDGTTTATVLANAIFSEGLRNITAGANPIEVKRGMDKACEEILKHLKASSKVINGKKDIAQVATISANSDTAIGDMIAEAMEKVGQDGVITVEEAKGIVDELDVVEGMQFDRGYLSPYFITNTEKMTAEIENPWILLADSKIASLKDLLPVLEQVQKTSRPLLIIAEDVEGEALSTLVVNKLRGVLNISAVKAPGFGDRRKAMLQDIAVLTAGTVISEETGHTLSGATIQHLGQASRIVIDKDNTVIVNGAGTSEAVQARVDAIKVQMNTTTSEYDKEKLQERLAKLSGGVAVIKVGAASETEMKEKKDRVDDALSATKAAVEEGIVIGGGAALVRAGAKVKLDLSGDQKIGCEIILRAIKAPLKQIATNAGYDAGVVVNAVEGATNENIGFNAATGEYVDMFEAGIIDPFKVGRVALTNATSIASLLLTTEAAIYELPEEKSSMPDMSGMGGMPGMM</sequence>
<comment type="function">
    <text evidence="1">Together with its co-chaperonin GroES, plays an essential role in assisting protein folding. The GroEL-GroES system forms a nano-cage that allows encapsulation of the non-native substrate proteins and provides a physical environment optimized to promote and accelerate protein folding.</text>
</comment>
<comment type="catalytic activity">
    <reaction evidence="1">
        <text>ATP + H2O + a folded polypeptide = ADP + phosphate + an unfolded polypeptide.</text>
        <dbReference type="EC" id="5.6.1.7"/>
    </reaction>
</comment>
<comment type="subunit">
    <text evidence="1">Forms a cylinder of 14 subunits composed of two heptameric rings stacked back-to-back. Interacts with the co-chaperonin GroES.</text>
</comment>
<comment type="subcellular location">
    <subcellularLocation>
        <location evidence="1">Cytoplasm</location>
    </subcellularLocation>
</comment>
<comment type="similarity">
    <text evidence="1">Belongs to the chaperonin (HSP60) family.</text>
</comment>
<feature type="chain" id="PRO_0000257017" description="Chaperonin GroEL">
    <location>
        <begin position="1"/>
        <end position="542"/>
    </location>
</feature>
<feature type="binding site" evidence="1">
    <location>
        <begin position="29"/>
        <end position="32"/>
    </location>
    <ligand>
        <name>ATP</name>
        <dbReference type="ChEBI" id="CHEBI:30616"/>
    </ligand>
</feature>
<feature type="binding site" evidence="1">
    <location>
        <position position="50"/>
    </location>
    <ligand>
        <name>ATP</name>
        <dbReference type="ChEBI" id="CHEBI:30616"/>
    </ligand>
</feature>
<feature type="binding site" evidence="1">
    <location>
        <begin position="86"/>
        <end position="90"/>
    </location>
    <ligand>
        <name>ATP</name>
        <dbReference type="ChEBI" id="CHEBI:30616"/>
    </ligand>
</feature>
<feature type="binding site" evidence="1">
    <location>
        <position position="414"/>
    </location>
    <ligand>
        <name>ATP</name>
        <dbReference type="ChEBI" id="CHEBI:30616"/>
    </ligand>
</feature>
<feature type="binding site" evidence="1">
    <location>
        <begin position="477"/>
        <end position="479"/>
    </location>
    <ligand>
        <name>ATP</name>
        <dbReference type="ChEBI" id="CHEBI:30616"/>
    </ligand>
</feature>
<feature type="binding site" evidence="1">
    <location>
        <position position="493"/>
    </location>
    <ligand>
        <name>ATP</name>
        <dbReference type="ChEBI" id="CHEBI:30616"/>
    </ligand>
</feature>
<proteinExistence type="inferred from homology"/>
<organism>
    <name type="scientific">Sulfurimonas denitrificans (strain ATCC 33889 / DSM 1251)</name>
    <name type="common">Thiomicrospira denitrificans (strain ATCC 33889 / DSM 1251)</name>
    <dbReference type="NCBI Taxonomy" id="326298"/>
    <lineage>
        <taxon>Bacteria</taxon>
        <taxon>Pseudomonadati</taxon>
        <taxon>Campylobacterota</taxon>
        <taxon>Epsilonproteobacteria</taxon>
        <taxon>Campylobacterales</taxon>
        <taxon>Sulfurimonadaceae</taxon>
        <taxon>Sulfurimonas</taxon>
    </lineage>
</organism>
<dbReference type="EC" id="5.6.1.7" evidence="1"/>
<dbReference type="EMBL" id="CP000153">
    <property type="protein sequence ID" value="ABB43910.1"/>
    <property type="molecule type" value="Genomic_DNA"/>
</dbReference>
<dbReference type="RefSeq" id="WP_011372264.1">
    <property type="nucleotide sequence ID" value="NC_007575.1"/>
</dbReference>
<dbReference type="SMR" id="Q30SX1"/>
<dbReference type="STRING" id="326298.Suden_0631"/>
<dbReference type="KEGG" id="tdn:Suden_0631"/>
<dbReference type="eggNOG" id="COG0459">
    <property type="taxonomic scope" value="Bacteria"/>
</dbReference>
<dbReference type="HOGENOM" id="CLU_016503_3_0_7"/>
<dbReference type="OrthoDB" id="9766614at2"/>
<dbReference type="Proteomes" id="UP000002714">
    <property type="component" value="Chromosome"/>
</dbReference>
<dbReference type="GO" id="GO:0005737">
    <property type="term" value="C:cytoplasm"/>
    <property type="evidence" value="ECO:0007669"/>
    <property type="project" value="UniProtKB-SubCell"/>
</dbReference>
<dbReference type="GO" id="GO:0005524">
    <property type="term" value="F:ATP binding"/>
    <property type="evidence" value="ECO:0007669"/>
    <property type="project" value="UniProtKB-UniRule"/>
</dbReference>
<dbReference type="GO" id="GO:0140662">
    <property type="term" value="F:ATP-dependent protein folding chaperone"/>
    <property type="evidence" value="ECO:0007669"/>
    <property type="project" value="InterPro"/>
</dbReference>
<dbReference type="GO" id="GO:0016853">
    <property type="term" value="F:isomerase activity"/>
    <property type="evidence" value="ECO:0007669"/>
    <property type="project" value="UniProtKB-KW"/>
</dbReference>
<dbReference type="GO" id="GO:0051082">
    <property type="term" value="F:unfolded protein binding"/>
    <property type="evidence" value="ECO:0007669"/>
    <property type="project" value="UniProtKB-UniRule"/>
</dbReference>
<dbReference type="GO" id="GO:0042026">
    <property type="term" value="P:protein refolding"/>
    <property type="evidence" value="ECO:0007669"/>
    <property type="project" value="UniProtKB-UniRule"/>
</dbReference>
<dbReference type="CDD" id="cd03344">
    <property type="entry name" value="GroEL"/>
    <property type="match status" value="1"/>
</dbReference>
<dbReference type="FunFam" id="3.50.7.10:FF:000001">
    <property type="entry name" value="60 kDa chaperonin"/>
    <property type="match status" value="1"/>
</dbReference>
<dbReference type="Gene3D" id="3.50.7.10">
    <property type="entry name" value="GroEL"/>
    <property type="match status" value="1"/>
</dbReference>
<dbReference type="Gene3D" id="1.10.560.10">
    <property type="entry name" value="GroEL-like equatorial domain"/>
    <property type="match status" value="1"/>
</dbReference>
<dbReference type="Gene3D" id="3.30.260.10">
    <property type="entry name" value="TCP-1-like chaperonin intermediate domain"/>
    <property type="match status" value="1"/>
</dbReference>
<dbReference type="HAMAP" id="MF_00600">
    <property type="entry name" value="CH60"/>
    <property type="match status" value="1"/>
</dbReference>
<dbReference type="InterPro" id="IPR018370">
    <property type="entry name" value="Chaperonin_Cpn60_CS"/>
</dbReference>
<dbReference type="InterPro" id="IPR001844">
    <property type="entry name" value="Cpn60/GroEL"/>
</dbReference>
<dbReference type="InterPro" id="IPR002423">
    <property type="entry name" value="Cpn60/GroEL/TCP-1"/>
</dbReference>
<dbReference type="InterPro" id="IPR027409">
    <property type="entry name" value="GroEL-like_apical_dom_sf"/>
</dbReference>
<dbReference type="InterPro" id="IPR027413">
    <property type="entry name" value="GROEL-like_equatorial_sf"/>
</dbReference>
<dbReference type="InterPro" id="IPR027410">
    <property type="entry name" value="TCP-1-like_intermed_sf"/>
</dbReference>
<dbReference type="NCBIfam" id="TIGR02348">
    <property type="entry name" value="GroEL"/>
    <property type="match status" value="1"/>
</dbReference>
<dbReference type="NCBIfam" id="NF000592">
    <property type="entry name" value="PRK00013.1"/>
    <property type="match status" value="1"/>
</dbReference>
<dbReference type="NCBIfam" id="NF009487">
    <property type="entry name" value="PRK12849.1"/>
    <property type="match status" value="1"/>
</dbReference>
<dbReference type="NCBIfam" id="NF009488">
    <property type="entry name" value="PRK12850.1"/>
    <property type="match status" value="1"/>
</dbReference>
<dbReference type="NCBIfam" id="NF009489">
    <property type="entry name" value="PRK12851.1"/>
    <property type="match status" value="1"/>
</dbReference>
<dbReference type="PANTHER" id="PTHR45633">
    <property type="entry name" value="60 KDA HEAT SHOCK PROTEIN, MITOCHONDRIAL"/>
    <property type="match status" value="1"/>
</dbReference>
<dbReference type="Pfam" id="PF00118">
    <property type="entry name" value="Cpn60_TCP1"/>
    <property type="match status" value="1"/>
</dbReference>
<dbReference type="PRINTS" id="PR00298">
    <property type="entry name" value="CHAPERONIN60"/>
</dbReference>
<dbReference type="SUPFAM" id="SSF52029">
    <property type="entry name" value="GroEL apical domain-like"/>
    <property type="match status" value="1"/>
</dbReference>
<dbReference type="SUPFAM" id="SSF48592">
    <property type="entry name" value="GroEL equatorial domain-like"/>
    <property type="match status" value="1"/>
</dbReference>
<dbReference type="SUPFAM" id="SSF54849">
    <property type="entry name" value="GroEL-intermediate domain like"/>
    <property type="match status" value="1"/>
</dbReference>
<dbReference type="PROSITE" id="PS00296">
    <property type="entry name" value="CHAPERONINS_CPN60"/>
    <property type="match status" value="1"/>
</dbReference>
<name>CH60_SULDN</name>
<reference key="1">
    <citation type="journal article" date="2008" name="Appl. Environ. Microbiol.">
        <title>Genome of the epsilonproteobacterial chemolithoautotroph Sulfurimonas denitrificans.</title>
        <authorList>
            <person name="Sievert S.M."/>
            <person name="Scott K.M."/>
            <person name="Klotz M.G."/>
            <person name="Chain P.S.G."/>
            <person name="Hauser L.J."/>
            <person name="Hemp J."/>
            <person name="Huegler M."/>
            <person name="Land M."/>
            <person name="Lapidus A."/>
            <person name="Larimer F.W."/>
            <person name="Lucas S."/>
            <person name="Malfatti S.A."/>
            <person name="Meyer F."/>
            <person name="Paulsen I.T."/>
            <person name="Ren Q."/>
            <person name="Simon J."/>
            <person name="Bailey K."/>
            <person name="Diaz E."/>
            <person name="Fitzpatrick K.A."/>
            <person name="Glover B."/>
            <person name="Gwatney N."/>
            <person name="Korajkic A."/>
            <person name="Long A."/>
            <person name="Mobberley J.M."/>
            <person name="Pantry S.N."/>
            <person name="Pazder G."/>
            <person name="Peterson S."/>
            <person name="Quintanilla J.D."/>
            <person name="Sprinkle R."/>
            <person name="Stephens J."/>
            <person name="Thomas P."/>
            <person name="Vaughn R."/>
            <person name="Weber M.J."/>
            <person name="Wooten L.L."/>
        </authorList>
    </citation>
    <scope>NUCLEOTIDE SEQUENCE [LARGE SCALE GENOMIC DNA]</scope>
    <source>
        <strain>ATCC 33889 / DSM 1251</strain>
    </source>
</reference>
<protein>
    <recommendedName>
        <fullName evidence="1">Chaperonin GroEL</fullName>
        <ecNumber evidence="1">5.6.1.7</ecNumber>
    </recommendedName>
    <alternativeName>
        <fullName evidence="1">60 kDa chaperonin</fullName>
    </alternativeName>
    <alternativeName>
        <fullName evidence="1">Chaperonin-60</fullName>
        <shortName evidence="1">Cpn60</shortName>
    </alternativeName>
</protein>
<evidence type="ECO:0000255" key="1">
    <source>
        <dbReference type="HAMAP-Rule" id="MF_00600"/>
    </source>
</evidence>
<accession>Q30SX1</accession>